<gene>
    <name evidence="1" type="primary">rplQ</name>
    <name type="ordered locus">MCAP_0669</name>
</gene>
<evidence type="ECO:0000255" key="1">
    <source>
        <dbReference type="HAMAP-Rule" id="MF_01368"/>
    </source>
</evidence>
<evidence type="ECO:0000305" key="2"/>
<keyword id="KW-0687">Ribonucleoprotein</keyword>
<keyword id="KW-0689">Ribosomal protein</keyword>
<protein>
    <recommendedName>
        <fullName evidence="1">Large ribosomal subunit protein bL17</fullName>
    </recommendedName>
    <alternativeName>
        <fullName evidence="2">50S ribosomal protein L17</fullName>
    </alternativeName>
</protein>
<accession>Q48980</accession>
<accession>Q2SRI0</accession>
<comment type="subunit">
    <text evidence="1">Part of the 50S ribosomal subunit. Contacts protein L32.</text>
</comment>
<comment type="similarity">
    <text evidence="1">Belongs to the bacterial ribosomal protein bL17 family.</text>
</comment>
<feature type="chain" id="PRO_0000175532" description="Large ribosomal subunit protein bL17">
    <location>
        <begin position="1"/>
        <end position="119"/>
    </location>
</feature>
<dbReference type="EMBL" id="Z33050">
    <property type="protein sequence ID" value="CAA83721.1"/>
    <property type="molecule type" value="Genomic_DNA"/>
</dbReference>
<dbReference type="EMBL" id="CP000123">
    <property type="protein sequence ID" value="ABC01711.1"/>
    <property type="molecule type" value="Genomic_DNA"/>
</dbReference>
<dbReference type="PIR" id="S77863">
    <property type="entry name" value="S77863"/>
</dbReference>
<dbReference type="RefSeq" id="WP_011166889.1">
    <property type="nucleotide sequence ID" value="NC_007633.1"/>
</dbReference>
<dbReference type="SMR" id="Q48980"/>
<dbReference type="GeneID" id="93426159"/>
<dbReference type="KEGG" id="mcp:MCAP_0669"/>
<dbReference type="HOGENOM" id="CLU_074407_2_2_14"/>
<dbReference type="PhylomeDB" id="Q48980"/>
<dbReference type="Proteomes" id="UP000001928">
    <property type="component" value="Chromosome"/>
</dbReference>
<dbReference type="GO" id="GO:0022625">
    <property type="term" value="C:cytosolic large ribosomal subunit"/>
    <property type="evidence" value="ECO:0007669"/>
    <property type="project" value="TreeGrafter"/>
</dbReference>
<dbReference type="GO" id="GO:0003735">
    <property type="term" value="F:structural constituent of ribosome"/>
    <property type="evidence" value="ECO:0007669"/>
    <property type="project" value="InterPro"/>
</dbReference>
<dbReference type="GO" id="GO:0006412">
    <property type="term" value="P:translation"/>
    <property type="evidence" value="ECO:0007669"/>
    <property type="project" value="UniProtKB-UniRule"/>
</dbReference>
<dbReference type="Gene3D" id="3.90.1030.10">
    <property type="entry name" value="Ribosomal protein L17"/>
    <property type="match status" value="1"/>
</dbReference>
<dbReference type="HAMAP" id="MF_01368">
    <property type="entry name" value="Ribosomal_bL17"/>
    <property type="match status" value="1"/>
</dbReference>
<dbReference type="InterPro" id="IPR000456">
    <property type="entry name" value="Ribosomal_bL17"/>
</dbReference>
<dbReference type="InterPro" id="IPR047859">
    <property type="entry name" value="Ribosomal_bL17_CS"/>
</dbReference>
<dbReference type="InterPro" id="IPR036373">
    <property type="entry name" value="Ribosomal_bL17_sf"/>
</dbReference>
<dbReference type="NCBIfam" id="TIGR00059">
    <property type="entry name" value="L17"/>
    <property type="match status" value="1"/>
</dbReference>
<dbReference type="PANTHER" id="PTHR14413:SF16">
    <property type="entry name" value="LARGE RIBOSOMAL SUBUNIT PROTEIN BL17M"/>
    <property type="match status" value="1"/>
</dbReference>
<dbReference type="PANTHER" id="PTHR14413">
    <property type="entry name" value="RIBOSOMAL PROTEIN L17"/>
    <property type="match status" value="1"/>
</dbReference>
<dbReference type="Pfam" id="PF01196">
    <property type="entry name" value="Ribosomal_L17"/>
    <property type="match status" value="1"/>
</dbReference>
<dbReference type="SUPFAM" id="SSF64263">
    <property type="entry name" value="Prokaryotic ribosomal protein L17"/>
    <property type="match status" value="1"/>
</dbReference>
<dbReference type="PROSITE" id="PS01167">
    <property type="entry name" value="RIBOSOMAL_L17"/>
    <property type="match status" value="1"/>
</dbReference>
<sequence length="119" mass="13896">MSYIQKRGQNTAWRTALMRNLTTELIINESLEVTQTRAKELRRHFDHMITLAKRGDLHSRRQAASWLRDIDADKKETALQKLFNKLAKKYENRNGGYTSILKLDNRKGDNAPMVIIKLI</sequence>
<name>RL17_MYCCT</name>
<proteinExistence type="inferred from homology"/>
<reference key="1">
    <citation type="journal article" date="1995" name="Mol. Microbiol.">
        <title>Exploring the Mycoplasma capricolum genome: a minimal cell reveals its physiology.</title>
        <authorList>
            <person name="Bork P."/>
            <person name="Ouzounis C."/>
            <person name="Casari G."/>
            <person name="Schneider R."/>
            <person name="Sander C."/>
            <person name="Dolan M."/>
            <person name="Gilbert W."/>
            <person name="Gillevet P.M."/>
        </authorList>
    </citation>
    <scope>NUCLEOTIDE SEQUENCE [GENOMIC DNA]</scope>
</reference>
<reference key="2">
    <citation type="submission" date="2005-09" db="EMBL/GenBank/DDBJ databases">
        <authorList>
            <person name="Glass J.I."/>
            <person name="Lartigue C."/>
            <person name="Pfannkoch C."/>
            <person name="Baden-Tillson H."/>
            <person name="Smith H.O."/>
            <person name="Venter J.C."/>
            <person name="Roske K."/>
            <person name="Wise K.S."/>
            <person name="Calcutt M.J."/>
            <person name="Nelson W.C."/>
            <person name="Nierman W.C."/>
        </authorList>
    </citation>
    <scope>NUCLEOTIDE SEQUENCE [LARGE SCALE GENOMIC DNA]</scope>
    <source>
        <strain>California kid / ATCC 27343 / NCTC 10154</strain>
    </source>
</reference>
<organism>
    <name type="scientific">Mycoplasma capricolum subsp. capricolum (strain California kid / ATCC 27343 / NCTC 10154)</name>
    <dbReference type="NCBI Taxonomy" id="340047"/>
    <lineage>
        <taxon>Bacteria</taxon>
        <taxon>Bacillati</taxon>
        <taxon>Mycoplasmatota</taxon>
        <taxon>Mollicutes</taxon>
        <taxon>Mycoplasmataceae</taxon>
        <taxon>Mycoplasma</taxon>
    </lineage>
</organism>